<feature type="transit peptide" description="Mitochondrion" evidence="5">
    <location>
        <begin position="1"/>
        <end position="32"/>
    </location>
</feature>
<feature type="chain" id="PRO_0000454669" description="Acetyl-CoA acetyltransferase FG05087, mitochondrial">
    <location>
        <begin position="33"/>
        <end position="430"/>
    </location>
</feature>
<feature type="active site" description="Acyl-thioester intermediate" evidence="1">
    <location>
        <position position="122"/>
    </location>
</feature>
<feature type="active site" description="Proton acceptor" evidence="6">
    <location>
        <position position="385"/>
    </location>
</feature>
<feature type="active site" description="Proton acceptor" evidence="6">
    <location>
        <position position="413"/>
    </location>
</feature>
<feature type="binding site" evidence="3">
    <location>
        <position position="217"/>
    </location>
    <ligand>
        <name>K(+)</name>
        <dbReference type="ChEBI" id="CHEBI:29103"/>
    </ligand>
</feature>
<feature type="binding site" evidence="3">
    <location>
        <position position="260"/>
    </location>
    <ligand>
        <name>CoA</name>
        <dbReference type="ChEBI" id="CHEBI:57287"/>
    </ligand>
</feature>
<feature type="binding site" evidence="3">
    <location>
        <position position="278"/>
    </location>
    <ligand>
        <name>K(+)</name>
        <dbReference type="ChEBI" id="CHEBI:29103"/>
    </ligand>
</feature>
<feature type="binding site" evidence="3">
    <location>
        <position position="282"/>
    </location>
    <ligand>
        <name>CoA</name>
        <dbReference type="ChEBI" id="CHEBI:57287"/>
    </ligand>
</feature>
<feature type="binding site" evidence="3">
    <location>
        <position position="414"/>
    </location>
    <ligand>
        <name>chloride</name>
        <dbReference type="ChEBI" id="CHEBI:17996"/>
    </ligand>
</feature>
<name>ER10A_GIBZE</name>
<reference key="1">
    <citation type="journal article" date="2007" name="Science">
        <title>The Fusarium graminearum genome reveals a link between localized polymorphism and pathogen specialization.</title>
        <authorList>
            <person name="Cuomo C.A."/>
            <person name="Gueldener U."/>
            <person name="Xu J.-R."/>
            <person name="Trail F."/>
            <person name="Turgeon B.G."/>
            <person name="Di Pietro A."/>
            <person name="Walton J.D."/>
            <person name="Ma L.-J."/>
            <person name="Baker S.E."/>
            <person name="Rep M."/>
            <person name="Adam G."/>
            <person name="Antoniw J."/>
            <person name="Baldwin T."/>
            <person name="Calvo S.E."/>
            <person name="Chang Y.-L."/>
            <person name="DeCaprio D."/>
            <person name="Gale L.R."/>
            <person name="Gnerre S."/>
            <person name="Goswami R.S."/>
            <person name="Hammond-Kosack K."/>
            <person name="Harris L.J."/>
            <person name="Hilburn K."/>
            <person name="Kennell J.C."/>
            <person name="Kroken S."/>
            <person name="Magnuson J.K."/>
            <person name="Mannhaupt G."/>
            <person name="Mauceli E.W."/>
            <person name="Mewes H.-W."/>
            <person name="Mitterbauer R."/>
            <person name="Muehlbauer G."/>
            <person name="Muensterkoetter M."/>
            <person name="Nelson D."/>
            <person name="O'Donnell K."/>
            <person name="Ouellet T."/>
            <person name="Qi W."/>
            <person name="Quesneville H."/>
            <person name="Roncero M.I.G."/>
            <person name="Seong K.-Y."/>
            <person name="Tetko I.V."/>
            <person name="Urban M."/>
            <person name="Waalwijk C."/>
            <person name="Ward T.J."/>
            <person name="Yao J."/>
            <person name="Birren B.W."/>
            <person name="Kistler H.C."/>
        </authorList>
    </citation>
    <scope>NUCLEOTIDE SEQUENCE [LARGE SCALE GENOMIC DNA]</scope>
    <source>
        <strain>ATCC MYA-4620 / CBS 123657 / FGSC 9075 / NRRL 31084 / PH-1</strain>
    </source>
</reference>
<reference key="2">
    <citation type="journal article" date="2010" name="Nature">
        <title>Comparative genomics reveals mobile pathogenicity chromosomes in Fusarium.</title>
        <authorList>
            <person name="Ma L.-J."/>
            <person name="van der Does H.C."/>
            <person name="Borkovich K.A."/>
            <person name="Coleman J.J."/>
            <person name="Daboussi M.-J."/>
            <person name="Di Pietro A."/>
            <person name="Dufresne M."/>
            <person name="Freitag M."/>
            <person name="Grabherr M."/>
            <person name="Henrissat B."/>
            <person name="Houterman P.M."/>
            <person name="Kang S."/>
            <person name="Shim W.-B."/>
            <person name="Woloshuk C."/>
            <person name="Xie X."/>
            <person name="Xu J.-R."/>
            <person name="Antoniw J."/>
            <person name="Baker S.E."/>
            <person name="Bluhm B.H."/>
            <person name="Breakspear A."/>
            <person name="Brown D.W."/>
            <person name="Butchko R.A.E."/>
            <person name="Chapman S."/>
            <person name="Coulson R."/>
            <person name="Coutinho P.M."/>
            <person name="Danchin E.G.J."/>
            <person name="Diener A."/>
            <person name="Gale L.R."/>
            <person name="Gardiner D.M."/>
            <person name="Goff S."/>
            <person name="Hammond-Kosack K.E."/>
            <person name="Hilburn K."/>
            <person name="Hua-Van A."/>
            <person name="Jonkers W."/>
            <person name="Kazan K."/>
            <person name="Kodira C.D."/>
            <person name="Koehrsen M."/>
            <person name="Kumar L."/>
            <person name="Lee Y.-H."/>
            <person name="Li L."/>
            <person name="Manners J.M."/>
            <person name="Miranda-Saavedra D."/>
            <person name="Mukherjee M."/>
            <person name="Park G."/>
            <person name="Park J."/>
            <person name="Park S.-Y."/>
            <person name="Proctor R.H."/>
            <person name="Regev A."/>
            <person name="Ruiz-Roldan M.C."/>
            <person name="Sain D."/>
            <person name="Sakthikumar S."/>
            <person name="Sykes S."/>
            <person name="Schwartz D.C."/>
            <person name="Turgeon B.G."/>
            <person name="Wapinski I."/>
            <person name="Yoder O."/>
            <person name="Young S."/>
            <person name="Zeng Q."/>
            <person name="Zhou S."/>
            <person name="Galagan J."/>
            <person name="Cuomo C.A."/>
            <person name="Kistler H.C."/>
            <person name="Rep M."/>
        </authorList>
    </citation>
    <scope>GENOME REANNOTATION</scope>
    <source>
        <strain>ATCC MYA-4620 / CBS 123657 / FGSC 9075 / NRRL 31084 / PH-1</strain>
    </source>
</reference>
<reference key="3">
    <citation type="journal article" date="2015" name="BMC Genomics">
        <title>The completed genome sequence of the pathogenic ascomycete fungus Fusarium graminearum.</title>
        <authorList>
            <person name="King R."/>
            <person name="Urban M."/>
            <person name="Hammond-Kosack M.C.U."/>
            <person name="Hassani-Pak K."/>
            <person name="Hammond-Kosack K.E."/>
        </authorList>
    </citation>
    <scope>NUCLEOTIDE SEQUENCE [LARGE SCALE GENOMIC DNA]</scope>
    <source>
        <strain>ATCC MYA-4620 / CBS 123657 / FGSC 9075 / NRRL 31084 / PH-1</strain>
    </source>
</reference>
<comment type="function">
    <text evidence="4">Mitochondrial acetyl-CoA acetyltransferase that catalyzes both the formation and degradation of acetoacetyl-CoA (By similarity). Seems not to be involved in ergosterol biosynthesis (By similarity). Plays an important role in growth, morphogenesis and maintaining mitochondrial function including the response to oxidative stresses (By similarity).</text>
</comment>
<comment type="catalytic activity">
    <reaction evidence="6">
        <text>2 acetyl-CoA = acetoacetyl-CoA + CoA</text>
        <dbReference type="Rhea" id="RHEA:21036"/>
        <dbReference type="ChEBI" id="CHEBI:57286"/>
        <dbReference type="ChEBI" id="CHEBI:57287"/>
        <dbReference type="ChEBI" id="CHEBI:57288"/>
        <dbReference type="EC" id="2.3.1.9"/>
    </reaction>
</comment>
<comment type="cofactor">
    <cofactor evidence="3">
        <name>K(+)</name>
        <dbReference type="ChEBI" id="CHEBI:29103"/>
    </cofactor>
</comment>
<comment type="subunit">
    <text evidence="2">Homotetramer.</text>
</comment>
<comment type="subcellular location">
    <subcellularLocation>
        <location evidence="2">Mitochondrion</location>
    </subcellularLocation>
</comment>
<comment type="similarity">
    <text evidence="7">Belongs to the thiolase-like superfamily. Thiolase family.</text>
</comment>
<accession>I1RMA2</accession>
<sequence>MTVTQLRSAGRLAQLAGHVNGARQFSTRPALRKELQDAYILSAARTPTAKFNGSFLSVSAPKLGAVAIKAALEKSKVPVEKITDVYMGNVLQGSVGQAPARQAVIFAGLPKEIEATTINKVCASGLKAVTLAAQNIQMGLSEAQIAGGMENMSQVPYYVSRASGLPAFGHVKMEDGLIKDGLTDVYDQFHMGNCAENTVKNHNITREQQDEYAIQSYRNAQKAWEDKAFADEIAPVTVKSRKGETVIDTDEGFKDVKFDKIPSLKPAFVRDGSGTVTAANSSTLNDGASALVLGSKAIAQQYGSGSRVLAKICGYADAATAPIDFPVAPAKAVPIALERAGITKDQVAIWEFNEAFASVILANSKILGLEGAKVNPLGGAISLGHALGSSGSRILTTLLHQLKPGEYGVAAICNGGGAATALVVQRVESV</sequence>
<keyword id="KW-0012">Acyltransferase</keyword>
<keyword id="KW-0479">Metal-binding</keyword>
<keyword id="KW-0496">Mitochondrion</keyword>
<keyword id="KW-0630">Potassium</keyword>
<keyword id="KW-1185">Reference proteome</keyword>
<keyword id="KW-0808">Transferase</keyword>
<keyword id="KW-0809">Transit peptide</keyword>
<gene>
    <name type="ORF">FG05087</name>
    <name type="ORF">FGRAMPH1_01T17069</name>
</gene>
<organism>
    <name type="scientific">Gibberella zeae (strain ATCC MYA-4620 / CBS 123657 / FGSC 9075 / NRRL 31084 / PH-1)</name>
    <name type="common">Wheat head blight fungus</name>
    <name type="synonym">Fusarium graminearum</name>
    <dbReference type="NCBI Taxonomy" id="229533"/>
    <lineage>
        <taxon>Eukaryota</taxon>
        <taxon>Fungi</taxon>
        <taxon>Dikarya</taxon>
        <taxon>Ascomycota</taxon>
        <taxon>Pezizomycotina</taxon>
        <taxon>Sordariomycetes</taxon>
        <taxon>Hypocreomycetidae</taxon>
        <taxon>Hypocreales</taxon>
        <taxon>Nectriaceae</taxon>
        <taxon>Fusarium</taxon>
    </lineage>
</organism>
<proteinExistence type="inferred from homology"/>
<dbReference type="EC" id="2.3.1.9" evidence="4"/>
<dbReference type="EMBL" id="HG970334">
    <property type="protein sequence ID" value="CEF87678.1"/>
    <property type="molecule type" value="Genomic_DNA"/>
</dbReference>
<dbReference type="RefSeq" id="XP_011323580.1">
    <property type="nucleotide sequence ID" value="XM_011325278.1"/>
</dbReference>
<dbReference type="SMR" id="I1RMA2"/>
<dbReference type="STRING" id="229533.I1RMA2"/>
<dbReference type="KEGG" id="fgr:FGSG_05087"/>
<dbReference type="VEuPathDB" id="FungiDB:FGRAMPH1_01G17069"/>
<dbReference type="eggNOG" id="KOG1390">
    <property type="taxonomic scope" value="Eukaryota"/>
</dbReference>
<dbReference type="HOGENOM" id="CLU_031026_0_1_1"/>
<dbReference type="InParanoid" id="I1RMA2"/>
<dbReference type="OrthoDB" id="81324at110618"/>
<dbReference type="Proteomes" id="UP000070720">
    <property type="component" value="Chromosome 3"/>
</dbReference>
<dbReference type="GO" id="GO:0005739">
    <property type="term" value="C:mitochondrion"/>
    <property type="evidence" value="ECO:0007669"/>
    <property type="project" value="UniProtKB-SubCell"/>
</dbReference>
<dbReference type="GO" id="GO:0003985">
    <property type="term" value="F:acetyl-CoA C-acetyltransferase activity"/>
    <property type="evidence" value="ECO:0007669"/>
    <property type="project" value="TreeGrafter"/>
</dbReference>
<dbReference type="GO" id="GO:0046872">
    <property type="term" value="F:metal ion binding"/>
    <property type="evidence" value="ECO:0007669"/>
    <property type="project" value="UniProtKB-KW"/>
</dbReference>
<dbReference type="GO" id="GO:0006635">
    <property type="term" value="P:fatty acid beta-oxidation"/>
    <property type="evidence" value="ECO:0007669"/>
    <property type="project" value="TreeGrafter"/>
</dbReference>
<dbReference type="CDD" id="cd00751">
    <property type="entry name" value="thiolase"/>
    <property type="match status" value="1"/>
</dbReference>
<dbReference type="FunFam" id="3.40.47.10:FF:000007">
    <property type="entry name" value="acetyl-CoA acetyltransferase, mitochondrial"/>
    <property type="match status" value="1"/>
</dbReference>
<dbReference type="Gene3D" id="3.40.47.10">
    <property type="match status" value="1"/>
</dbReference>
<dbReference type="InterPro" id="IPR002155">
    <property type="entry name" value="Thiolase"/>
</dbReference>
<dbReference type="InterPro" id="IPR016039">
    <property type="entry name" value="Thiolase-like"/>
</dbReference>
<dbReference type="InterPro" id="IPR020615">
    <property type="entry name" value="Thiolase_acyl_enz_int_AS"/>
</dbReference>
<dbReference type="InterPro" id="IPR020610">
    <property type="entry name" value="Thiolase_AS"/>
</dbReference>
<dbReference type="InterPro" id="IPR020617">
    <property type="entry name" value="Thiolase_C"/>
</dbReference>
<dbReference type="InterPro" id="IPR020616">
    <property type="entry name" value="Thiolase_N"/>
</dbReference>
<dbReference type="NCBIfam" id="TIGR01930">
    <property type="entry name" value="AcCoA-C-Actrans"/>
    <property type="match status" value="1"/>
</dbReference>
<dbReference type="PANTHER" id="PTHR18919:SF156">
    <property type="entry name" value="ACETYL-COA ACETYLTRANSFERASE, MITOCHONDRIAL"/>
    <property type="match status" value="1"/>
</dbReference>
<dbReference type="PANTHER" id="PTHR18919">
    <property type="entry name" value="ACETYL-COA C-ACYLTRANSFERASE"/>
    <property type="match status" value="1"/>
</dbReference>
<dbReference type="Pfam" id="PF02803">
    <property type="entry name" value="Thiolase_C"/>
    <property type="match status" value="1"/>
</dbReference>
<dbReference type="Pfam" id="PF00108">
    <property type="entry name" value="Thiolase_N"/>
    <property type="match status" value="1"/>
</dbReference>
<dbReference type="PIRSF" id="PIRSF000429">
    <property type="entry name" value="Ac-CoA_Ac_transf"/>
    <property type="match status" value="1"/>
</dbReference>
<dbReference type="SUPFAM" id="SSF53901">
    <property type="entry name" value="Thiolase-like"/>
    <property type="match status" value="2"/>
</dbReference>
<dbReference type="PROSITE" id="PS00098">
    <property type="entry name" value="THIOLASE_1"/>
    <property type="match status" value="1"/>
</dbReference>
<dbReference type="PROSITE" id="PS00099">
    <property type="entry name" value="THIOLASE_3"/>
    <property type="match status" value="1"/>
</dbReference>
<protein>
    <recommendedName>
        <fullName evidence="4">Acetyl-CoA acetyltransferase FG05087, mitochondrial</fullName>
        <ecNumber evidence="4">2.3.1.9</ecNumber>
    </recommendedName>
    <alternativeName>
        <fullName evidence="4">Acetoacetyl-CoA thiolase FG05087</fullName>
    </alternativeName>
</protein>
<evidence type="ECO:0000250" key="1">
    <source>
        <dbReference type="UniProtKB" id="P24752"/>
    </source>
</evidence>
<evidence type="ECO:0000250" key="2">
    <source>
        <dbReference type="UniProtKB" id="P41338"/>
    </source>
</evidence>
<evidence type="ECO:0000250" key="3">
    <source>
        <dbReference type="UniProtKB" id="Q4WCL5"/>
    </source>
</evidence>
<evidence type="ECO:0000250" key="4">
    <source>
        <dbReference type="UniProtKB" id="Q4WLA8"/>
    </source>
</evidence>
<evidence type="ECO:0000255" key="5"/>
<evidence type="ECO:0000255" key="6">
    <source>
        <dbReference type="PROSITE-ProRule" id="PRU10020"/>
    </source>
</evidence>
<evidence type="ECO:0000305" key="7"/>